<dbReference type="EMBL" id="AM236080">
    <property type="protein sequence ID" value="CAK05620.1"/>
    <property type="molecule type" value="Genomic_DNA"/>
</dbReference>
<dbReference type="RefSeq" id="WP_011649952.1">
    <property type="nucleotide sequence ID" value="NC_008380.1"/>
</dbReference>
<dbReference type="SMR" id="Q1MN32"/>
<dbReference type="EnsemblBacteria" id="CAK05620">
    <property type="protein sequence ID" value="CAK05620"/>
    <property type="gene ID" value="RL0131A"/>
</dbReference>
<dbReference type="KEGG" id="rle:RL0131A"/>
<dbReference type="eggNOG" id="COG0353">
    <property type="taxonomic scope" value="Bacteria"/>
</dbReference>
<dbReference type="HOGENOM" id="CLU_060739_1_1_5"/>
<dbReference type="Proteomes" id="UP000006575">
    <property type="component" value="Chromosome"/>
</dbReference>
<dbReference type="GO" id="GO:0003677">
    <property type="term" value="F:DNA binding"/>
    <property type="evidence" value="ECO:0007669"/>
    <property type="project" value="UniProtKB-UniRule"/>
</dbReference>
<dbReference type="GO" id="GO:0008270">
    <property type="term" value="F:zinc ion binding"/>
    <property type="evidence" value="ECO:0007669"/>
    <property type="project" value="UniProtKB-KW"/>
</dbReference>
<dbReference type="GO" id="GO:0006310">
    <property type="term" value="P:DNA recombination"/>
    <property type="evidence" value="ECO:0007669"/>
    <property type="project" value="UniProtKB-UniRule"/>
</dbReference>
<dbReference type="GO" id="GO:0006281">
    <property type="term" value="P:DNA repair"/>
    <property type="evidence" value="ECO:0007669"/>
    <property type="project" value="UniProtKB-UniRule"/>
</dbReference>
<dbReference type="CDD" id="cd01025">
    <property type="entry name" value="TOPRIM_recR"/>
    <property type="match status" value="1"/>
</dbReference>
<dbReference type="Gene3D" id="3.40.1360.10">
    <property type="match status" value="1"/>
</dbReference>
<dbReference type="Gene3D" id="6.10.250.240">
    <property type="match status" value="1"/>
</dbReference>
<dbReference type="Gene3D" id="1.10.8.420">
    <property type="entry name" value="RecR Domain 1"/>
    <property type="match status" value="1"/>
</dbReference>
<dbReference type="HAMAP" id="MF_00017">
    <property type="entry name" value="RecR"/>
    <property type="match status" value="1"/>
</dbReference>
<dbReference type="InterPro" id="IPR000093">
    <property type="entry name" value="DNA_Rcmb_RecR"/>
</dbReference>
<dbReference type="InterPro" id="IPR023627">
    <property type="entry name" value="Rcmb_RecR"/>
</dbReference>
<dbReference type="InterPro" id="IPR015967">
    <property type="entry name" value="Rcmb_RecR_Znf"/>
</dbReference>
<dbReference type="InterPro" id="IPR006171">
    <property type="entry name" value="TOPRIM_dom"/>
</dbReference>
<dbReference type="InterPro" id="IPR034137">
    <property type="entry name" value="TOPRIM_RecR"/>
</dbReference>
<dbReference type="NCBIfam" id="TIGR00615">
    <property type="entry name" value="recR"/>
    <property type="match status" value="1"/>
</dbReference>
<dbReference type="PANTHER" id="PTHR30446">
    <property type="entry name" value="RECOMBINATION PROTEIN RECR"/>
    <property type="match status" value="1"/>
</dbReference>
<dbReference type="PANTHER" id="PTHR30446:SF0">
    <property type="entry name" value="RECOMBINATION PROTEIN RECR"/>
    <property type="match status" value="1"/>
</dbReference>
<dbReference type="Pfam" id="PF21175">
    <property type="entry name" value="RecR_C"/>
    <property type="match status" value="1"/>
</dbReference>
<dbReference type="Pfam" id="PF21176">
    <property type="entry name" value="RecR_HhH"/>
    <property type="match status" value="1"/>
</dbReference>
<dbReference type="Pfam" id="PF13662">
    <property type="entry name" value="Toprim_4"/>
    <property type="match status" value="1"/>
</dbReference>
<dbReference type="SMART" id="SM00493">
    <property type="entry name" value="TOPRIM"/>
    <property type="match status" value="1"/>
</dbReference>
<dbReference type="SUPFAM" id="SSF111304">
    <property type="entry name" value="Recombination protein RecR"/>
    <property type="match status" value="1"/>
</dbReference>
<dbReference type="PROSITE" id="PS01300">
    <property type="entry name" value="RECR"/>
    <property type="match status" value="1"/>
</dbReference>
<dbReference type="PROSITE" id="PS50880">
    <property type="entry name" value="TOPRIM"/>
    <property type="match status" value="1"/>
</dbReference>
<gene>
    <name evidence="1" type="primary">recR</name>
    <name type="ordered locus">RL0131.1</name>
    <name type="ORF">RL0131A</name>
</gene>
<comment type="function">
    <text evidence="1">May play a role in DNA repair. It seems to be involved in an RecBC-independent recombinational process of DNA repair. It may act with RecF and RecO.</text>
</comment>
<comment type="similarity">
    <text evidence="1">Belongs to the RecR family.</text>
</comment>
<accession>Q1MN32</accession>
<reference key="1">
    <citation type="journal article" date="2006" name="Genome Biol.">
        <title>The genome of Rhizobium leguminosarum has recognizable core and accessory components.</title>
        <authorList>
            <person name="Young J.P.W."/>
            <person name="Crossman L.C."/>
            <person name="Johnston A.W.B."/>
            <person name="Thomson N.R."/>
            <person name="Ghazoui Z.F."/>
            <person name="Hull K.H."/>
            <person name="Wexler M."/>
            <person name="Curson A.R.J."/>
            <person name="Todd J.D."/>
            <person name="Poole P.S."/>
            <person name="Mauchline T.H."/>
            <person name="East A.K."/>
            <person name="Quail M.A."/>
            <person name="Churcher C."/>
            <person name="Arrowsmith C."/>
            <person name="Cherevach I."/>
            <person name="Chillingworth T."/>
            <person name="Clarke K."/>
            <person name="Cronin A."/>
            <person name="Davis P."/>
            <person name="Fraser A."/>
            <person name="Hance Z."/>
            <person name="Hauser H."/>
            <person name="Jagels K."/>
            <person name="Moule S."/>
            <person name="Mungall K."/>
            <person name="Norbertczak H."/>
            <person name="Rabbinowitsch E."/>
            <person name="Sanders M."/>
            <person name="Simmonds M."/>
            <person name="Whitehead S."/>
            <person name="Parkhill J."/>
        </authorList>
    </citation>
    <scope>NUCLEOTIDE SEQUENCE [LARGE SCALE GENOMIC DNA]</scope>
    <source>
        <strain>DSM 114642 / LMG 32736 / 3841</strain>
    </source>
</reference>
<feature type="chain" id="PRO_1000001592" description="Recombination protein RecR">
    <location>
        <begin position="1"/>
        <end position="201"/>
    </location>
</feature>
<feature type="domain" description="Toprim" evidence="1">
    <location>
        <begin position="83"/>
        <end position="178"/>
    </location>
</feature>
<feature type="zinc finger region" description="C4-type" evidence="1">
    <location>
        <begin position="60"/>
        <end position="75"/>
    </location>
</feature>
<proteinExistence type="inferred from homology"/>
<protein>
    <recommendedName>
        <fullName evidence="1">Recombination protein RecR</fullName>
    </recommendedName>
</protein>
<keyword id="KW-0227">DNA damage</keyword>
<keyword id="KW-0233">DNA recombination</keyword>
<keyword id="KW-0234">DNA repair</keyword>
<keyword id="KW-0479">Metal-binding</keyword>
<keyword id="KW-0862">Zinc</keyword>
<keyword id="KW-0863">Zinc-finger</keyword>
<name>RECR_RHIJ3</name>
<organism>
    <name type="scientific">Rhizobium johnstonii (strain DSM 114642 / LMG 32736 / 3841)</name>
    <name type="common">Rhizobium leguminosarum bv. viciae</name>
    <dbReference type="NCBI Taxonomy" id="216596"/>
    <lineage>
        <taxon>Bacteria</taxon>
        <taxon>Pseudomonadati</taxon>
        <taxon>Pseudomonadota</taxon>
        <taxon>Alphaproteobacteria</taxon>
        <taxon>Hyphomicrobiales</taxon>
        <taxon>Rhizobiaceae</taxon>
        <taxon>Rhizobium/Agrobacterium group</taxon>
        <taxon>Rhizobium</taxon>
        <taxon>Rhizobium johnstonii</taxon>
    </lineage>
</organism>
<evidence type="ECO:0000255" key="1">
    <source>
        <dbReference type="HAMAP-Rule" id="MF_00017"/>
    </source>
</evidence>
<sequence>MAKRVTGPEIEKLIQLLAKVPGLGPRSARRAALHLIKKKDQLLGPLSHAMGEAYDKVKICSRCGNVDTVDPCIVCTDVQRDQSVIIVVEDVSDLWALERAGAMNAAYHVLGGTLSPLDGVGPDDLNIRGLIDRVGEGGIRELIIAVNATVEGQTTAHYITDQLQGLDVKITRLAHGVPVGGELDYLDEGTLAAALRARTVI</sequence>